<name>ACSA_AGRFC</name>
<proteinExistence type="inferred from homology"/>
<reference key="1">
    <citation type="journal article" date="2001" name="Science">
        <title>The genome of the natural genetic engineer Agrobacterium tumefaciens C58.</title>
        <authorList>
            <person name="Wood D.W."/>
            <person name="Setubal J.C."/>
            <person name="Kaul R."/>
            <person name="Monks D.E."/>
            <person name="Kitajima J.P."/>
            <person name="Okura V.K."/>
            <person name="Zhou Y."/>
            <person name="Chen L."/>
            <person name="Wood G.E."/>
            <person name="Almeida N.F. Jr."/>
            <person name="Woo L."/>
            <person name="Chen Y."/>
            <person name="Paulsen I.T."/>
            <person name="Eisen J.A."/>
            <person name="Karp P.D."/>
            <person name="Bovee D. Sr."/>
            <person name="Chapman P."/>
            <person name="Clendenning J."/>
            <person name="Deatherage G."/>
            <person name="Gillet W."/>
            <person name="Grant C."/>
            <person name="Kutyavin T."/>
            <person name="Levy R."/>
            <person name="Li M.-J."/>
            <person name="McClelland E."/>
            <person name="Palmieri A."/>
            <person name="Raymond C."/>
            <person name="Rouse G."/>
            <person name="Saenphimmachak C."/>
            <person name="Wu Z."/>
            <person name="Romero P."/>
            <person name="Gordon D."/>
            <person name="Zhang S."/>
            <person name="Yoo H."/>
            <person name="Tao Y."/>
            <person name="Biddle P."/>
            <person name="Jung M."/>
            <person name="Krespan W."/>
            <person name="Perry M."/>
            <person name="Gordon-Kamm B."/>
            <person name="Liao L."/>
            <person name="Kim S."/>
            <person name="Hendrick C."/>
            <person name="Zhao Z.-Y."/>
            <person name="Dolan M."/>
            <person name="Chumley F."/>
            <person name="Tingey S.V."/>
            <person name="Tomb J.-F."/>
            <person name="Gordon M.P."/>
            <person name="Olson M.V."/>
            <person name="Nester E.W."/>
        </authorList>
    </citation>
    <scope>NUCLEOTIDE SEQUENCE [LARGE SCALE GENOMIC DNA]</scope>
    <source>
        <strain>C58 / ATCC 33970</strain>
    </source>
</reference>
<reference key="2">
    <citation type="journal article" date="2001" name="Science">
        <title>Genome sequence of the plant pathogen and biotechnology agent Agrobacterium tumefaciens C58.</title>
        <authorList>
            <person name="Goodner B."/>
            <person name="Hinkle G."/>
            <person name="Gattung S."/>
            <person name="Miller N."/>
            <person name="Blanchard M."/>
            <person name="Qurollo B."/>
            <person name="Goldman B.S."/>
            <person name="Cao Y."/>
            <person name="Askenazi M."/>
            <person name="Halling C."/>
            <person name="Mullin L."/>
            <person name="Houmiel K."/>
            <person name="Gordon J."/>
            <person name="Vaudin M."/>
            <person name="Iartchouk O."/>
            <person name="Epp A."/>
            <person name="Liu F."/>
            <person name="Wollam C."/>
            <person name="Allinger M."/>
            <person name="Doughty D."/>
            <person name="Scott C."/>
            <person name="Lappas C."/>
            <person name="Markelz B."/>
            <person name="Flanagan C."/>
            <person name="Crowell C."/>
            <person name="Gurson J."/>
            <person name="Lomo C."/>
            <person name="Sear C."/>
            <person name="Strub G."/>
            <person name="Cielo C."/>
            <person name="Slater S."/>
        </authorList>
    </citation>
    <scope>NUCLEOTIDE SEQUENCE [LARGE SCALE GENOMIC DNA]</scope>
    <source>
        <strain>C58 / ATCC 33970</strain>
    </source>
</reference>
<organism>
    <name type="scientific">Agrobacterium fabrum (strain C58 / ATCC 33970)</name>
    <name type="common">Agrobacterium tumefaciens (strain C58)</name>
    <dbReference type="NCBI Taxonomy" id="176299"/>
    <lineage>
        <taxon>Bacteria</taxon>
        <taxon>Pseudomonadati</taxon>
        <taxon>Pseudomonadota</taxon>
        <taxon>Alphaproteobacteria</taxon>
        <taxon>Hyphomicrobiales</taxon>
        <taxon>Rhizobiaceae</taxon>
        <taxon>Rhizobium/Agrobacterium group</taxon>
        <taxon>Agrobacterium</taxon>
        <taxon>Agrobacterium tumefaciens complex</taxon>
    </lineage>
</organism>
<feature type="chain" id="PRO_0000208352" description="Acetyl-coenzyme A synthetase">
    <location>
        <begin position="1"/>
        <end position="651"/>
    </location>
</feature>
<feature type="binding site" evidence="1">
    <location>
        <begin position="189"/>
        <end position="192"/>
    </location>
    <ligand>
        <name>CoA</name>
        <dbReference type="ChEBI" id="CHEBI:57287"/>
    </ligand>
</feature>
<feature type="binding site" evidence="1">
    <location>
        <position position="311"/>
    </location>
    <ligand>
        <name>CoA</name>
        <dbReference type="ChEBI" id="CHEBI:57287"/>
    </ligand>
</feature>
<feature type="binding site" evidence="1">
    <location>
        <position position="335"/>
    </location>
    <ligand>
        <name>CoA</name>
        <dbReference type="ChEBI" id="CHEBI:57287"/>
    </ligand>
</feature>
<feature type="binding site" evidence="1">
    <location>
        <begin position="387"/>
        <end position="389"/>
    </location>
    <ligand>
        <name>ATP</name>
        <dbReference type="ChEBI" id="CHEBI:30616"/>
    </ligand>
</feature>
<feature type="binding site" evidence="1">
    <location>
        <begin position="411"/>
        <end position="416"/>
    </location>
    <ligand>
        <name>ATP</name>
        <dbReference type="ChEBI" id="CHEBI:30616"/>
    </ligand>
</feature>
<feature type="binding site" evidence="1">
    <location>
        <position position="500"/>
    </location>
    <ligand>
        <name>ATP</name>
        <dbReference type="ChEBI" id="CHEBI:30616"/>
    </ligand>
</feature>
<feature type="binding site" evidence="1">
    <location>
        <position position="515"/>
    </location>
    <ligand>
        <name>ATP</name>
        <dbReference type="ChEBI" id="CHEBI:30616"/>
    </ligand>
</feature>
<feature type="binding site" evidence="1">
    <location>
        <position position="523"/>
    </location>
    <ligand>
        <name>CoA</name>
        <dbReference type="ChEBI" id="CHEBI:57287"/>
    </ligand>
</feature>
<feature type="binding site" evidence="1">
    <location>
        <position position="526"/>
    </location>
    <ligand>
        <name>ATP</name>
        <dbReference type="ChEBI" id="CHEBI:30616"/>
    </ligand>
</feature>
<feature type="binding site" evidence="1">
    <location>
        <position position="537"/>
    </location>
    <ligand>
        <name>Mg(2+)</name>
        <dbReference type="ChEBI" id="CHEBI:18420"/>
    </ligand>
</feature>
<feature type="binding site" evidence="1">
    <location>
        <position position="539"/>
    </location>
    <ligand>
        <name>Mg(2+)</name>
        <dbReference type="ChEBI" id="CHEBI:18420"/>
    </ligand>
</feature>
<feature type="binding site" evidence="1">
    <location>
        <position position="542"/>
    </location>
    <ligand>
        <name>Mg(2+)</name>
        <dbReference type="ChEBI" id="CHEBI:18420"/>
    </ligand>
</feature>
<feature type="binding site">
    <location>
        <position position="584"/>
    </location>
    <ligand>
        <name>CoA</name>
        <dbReference type="ChEBI" id="CHEBI:57287"/>
    </ligand>
</feature>
<feature type="modified residue" description="N6-acetyllysine" evidence="1">
    <location>
        <position position="609"/>
    </location>
</feature>
<gene>
    <name evidence="1" type="primary">acsA</name>
    <name type="synonym">acs</name>
    <name type="ordered locus">Atu2745</name>
    <name type="ORF">AGR_C_4980</name>
</gene>
<protein>
    <recommendedName>
        <fullName evidence="1">Acetyl-coenzyme A synthetase</fullName>
        <shortName evidence="1">AcCoA synthetase</shortName>
        <shortName evidence="1">Acs</shortName>
        <ecNumber evidence="1">6.2.1.1</ecNumber>
    </recommendedName>
    <alternativeName>
        <fullName evidence="1">Acetate--CoA ligase</fullName>
    </alternativeName>
    <alternativeName>
        <fullName evidence="1">Acyl-activating enzyme</fullName>
    </alternativeName>
</protein>
<sequence>MSAKIYPVLKSAKARTLIDNERYQKWYQESVEDPEKFWDKHGRRIDWFKPYTKVKNTSFKGRVPIKWFEDGLTNVSYNCIDRHLKTHGERTAIIWEGDNPYIDKKITYNQLYDYVCRLANVLKKHGVKKGDRVTIYMPMIPEAAYAMLACARIGAVHSVVFGGFSPEALAGRIVDCESTFVITCDEGVRGGKPIPLKENTDKAIDIAAKQYVIVNKVLVVRRTGGKTGWAPGRDIWYHQEIATVKPDCPPVKMRAEDPLFILYTSGSTGKPKGVLHTTGGYLVYTSMTHEYVFDYKDGEVFWCTADVGWVTGHSYIVYGPLANCATTLMFEGVPNFPDQGRFWEVIDKHKVNIFYTAPTALRSLMGAGDQFVQRSSRESLRLLGTVGEPINPEAWEWYYHVVGEDKSPIVDTWWQTETGGILISPLPGATDLKPGSATRPFFGVQPQLVDAEGNVLEGPADGNLCIIDSWPGQSRSVYGDHQRFVDTYFSTYKGKYFTGDGCRRDEDGYYWITGRVDDVLNVSGHRLGTAEVESALVSHHQVSEAAVVGYPHPIKGQGIYCYVTLMAGQSGDYALREELVKHVRNEIGPVATPDKIQFAPGLPKTRSGKIMRRILRKIAEDDFGALGDTSTLADPAVVEDLIANRQNRTAS</sequence>
<dbReference type="EC" id="6.2.1.1" evidence="1"/>
<dbReference type="EMBL" id="AE007869">
    <property type="protein sequence ID" value="AAK88460.2"/>
    <property type="molecule type" value="Genomic_DNA"/>
</dbReference>
<dbReference type="PIR" id="AH2913">
    <property type="entry name" value="AH2913"/>
</dbReference>
<dbReference type="PIR" id="C97688">
    <property type="entry name" value="C97688"/>
</dbReference>
<dbReference type="RefSeq" id="NP_355675.2">
    <property type="nucleotide sequence ID" value="NC_003062.2"/>
</dbReference>
<dbReference type="RefSeq" id="WP_010972535.1">
    <property type="nucleotide sequence ID" value="NC_003062.2"/>
</dbReference>
<dbReference type="SMR" id="Q8UBV5"/>
<dbReference type="STRING" id="176299.Atu2745"/>
<dbReference type="EnsemblBacteria" id="AAK88460">
    <property type="protein sequence ID" value="AAK88460"/>
    <property type="gene ID" value="Atu2745"/>
</dbReference>
<dbReference type="GeneID" id="1134783"/>
<dbReference type="KEGG" id="atu:Atu2745"/>
<dbReference type="PATRIC" id="fig|176299.10.peg.2755"/>
<dbReference type="eggNOG" id="COG0365">
    <property type="taxonomic scope" value="Bacteria"/>
</dbReference>
<dbReference type="HOGENOM" id="CLU_000022_3_6_5"/>
<dbReference type="OrthoDB" id="9803968at2"/>
<dbReference type="PhylomeDB" id="Q8UBV5"/>
<dbReference type="BioCyc" id="AGRO:ATU4130-MONOMER"/>
<dbReference type="Proteomes" id="UP000000813">
    <property type="component" value="Chromosome circular"/>
</dbReference>
<dbReference type="GO" id="GO:0005829">
    <property type="term" value="C:cytosol"/>
    <property type="evidence" value="ECO:0007669"/>
    <property type="project" value="TreeGrafter"/>
</dbReference>
<dbReference type="GO" id="GO:0003987">
    <property type="term" value="F:acetate-CoA ligase activity"/>
    <property type="evidence" value="ECO:0007669"/>
    <property type="project" value="UniProtKB-UniRule"/>
</dbReference>
<dbReference type="GO" id="GO:0016208">
    <property type="term" value="F:AMP binding"/>
    <property type="evidence" value="ECO:0007669"/>
    <property type="project" value="InterPro"/>
</dbReference>
<dbReference type="GO" id="GO:0005524">
    <property type="term" value="F:ATP binding"/>
    <property type="evidence" value="ECO:0007669"/>
    <property type="project" value="UniProtKB-KW"/>
</dbReference>
<dbReference type="GO" id="GO:0046872">
    <property type="term" value="F:metal ion binding"/>
    <property type="evidence" value="ECO:0007669"/>
    <property type="project" value="UniProtKB-KW"/>
</dbReference>
<dbReference type="GO" id="GO:0019427">
    <property type="term" value="P:acetyl-CoA biosynthetic process from acetate"/>
    <property type="evidence" value="ECO:0007669"/>
    <property type="project" value="InterPro"/>
</dbReference>
<dbReference type="CDD" id="cd05966">
    <property type="entry name" value="ACS"/>
    <property type="match status" value="1"/>
</dbReference>
<dbReference type="FunFam" id="3.30.300.30:FF:000004">
    <property type="entry name" value="Acetyl-coenzyme A synthetase"/>
    <property type="match status" value="1"/>
</dbReference>
<dbReference type="FunFam" id="3.40.50.12780:FF:000001">
    <property type="entry name" value="Acetyl-coenzyme A synthetase"/>
    <property type="match status" value="1"/>
</dbReference>
<dbReference type="Gene3D" id="3.30.300.30">
    <property type="match status" value="1"/>
</dbReference>
<dbReference type="Gene3D" id="3.40.50.12780">
    <property type="entry name" value="N-terminal domain of ligase-like"/>
    <property type="match status" value="1"/>
</dbReference>
<dbReference type="HAMAP" id="MF_01123">
    <property type="entry name" value="Ac_CoA_synth"/>
    <property type="match status" value="1"/>
</dbReference>
<dbReference type="InterPro" id="IPR011904">
    <property type="entry name" value="Ac_CoA_lig"/>
</dbReference>
<dbReference type="InterPro" id="IPR032387">
    <property type="entry name" value="ACAS_N"/>
</dbReference>
<dbReference type="InterPro" id="IPR025110">
    <property type="entry name" value="AMP-bd_C"/>
</dbReference>
<dbReference type="InterPro" id="IPR045851">
    <property type="entry name" value="AMP-bd_C_sf"/>
</dbReference>
<dbReference type="InterPro" id="IPR020845">
    <property type="entry name" value="AMP-binding_CS"/>
</dbReference>
<dbReference type="InterPro" id="IPR000873">
    <property type="entry name" value="AMP-dep_synth/lig_dom"/>
</dbReference>
<dbReference type="InterPro" id="IPR042099">
    <property type="entry name" value="ANL_N_sf"/>
</dbReference>
<dbReference type="NCBIfam" id="TIGR02188">
    <property type="entry name" value="Ac_CoA_lig_AcsA"/>
    <property type="match status" value="1"/>
</dbReference>
<dbReference type="NCBIfam" id="NF001208">
    <property type="entry name" value="PRK00174.1"/>
    <property type="match status" value="1"/>
</dbReference>
<dbReference type="PANTHER" id="PTHR24095">
    <property type="entry name" value="ACETYL-COENZYME A SYNTHETASE"/>
    <property type="match status" value="1"/>
</dbReference>
<dbReference type="PANTHER" id="PTHR24095:SF14">
    <property type="entry name" value="ACETYL-COENZYME A SYNTHETASE 1"/>
    <property type="match status" value="1"/>
</dbReference>
<dbReference type="Pfam" id="PF16177">
    <property type="entry name" value="ACAS_N"/>
    <property type="match status" value="1"/>
</dbReference>
<dbReference type="Pfam" id="PF00501">
    <property type="entry name" value="AMP-binding"/>
    <property type="match status" value="1"/>
</dbReference>
<dbReference type="Pfam" id="PF13193">
    <property type="entry name" value="AMP-binding_C"/>
    <property type="match status" value="1"/>
</dbReference>
<dbReference type="SUPFAM" id="SSF56801">
    <property type="entry name" value="Acetyl-CoA synthetase-like"/>
    <property type="match status" value="1"/>
</dbReference>
<dbReference type="PROSITE" id="PS00455">
    <property type="entry name" value="AMP_BINDING"/>
    <property type="match status" value="1"/>
</dbReference>
<evidence type="ECO:0000255" key="1">
    <source>
        <dbReference type="HAMAP-Rule" id="MF_01123"/>
    </source>
</evidence>
<keyword id="KW-0007">Acetylation</keyword>
<keyword id="KW-0067">ATP-binding</keyword>
<keyword id="KW-0436">Ligase</keyword>
<keyword id="KW-0460">Magnesium</keyword>
<keyword id="KW-0479">Metal-binding</keyword>
<keyword id="KW-0547">Nucleotide-binding</keyword>
<keyword id="KW-1185">Reference proteome</keyword>
<comment type="function">
    <text evidence="1">Catalyzes the conversion of acetate into acetyl-CoA (AcCoA), an essential intermediate at the junction of anabolic and catabolic pathways. AcsA undergoes a two-step reaction. In the first half reaction, AcsA combines acetate with ATP to form acetyl-adenylate (AcAMP) intermediate. In the second half reaction, it can then transfer the acetyl group from AcAMP to the sulfhydryl group of CoA, forming the product AcCoA.</text>
</comment>
<comment type="catalytic activity">
    <reaction evidence="1">
        <text>acetate + ATP + CoA = acetyl-CoA + AMP + diphosphate</text>
        <dbReference type="Rhea" id="RHEA:23176"/>
        <dbReference type="ChEBI" id="CHEBI:30089"/>
        <dbReference type="ChEBI" id="CHEBI:30616"/>
        <dbReference type="ChEBI" id="CHEBI:33019"/>
        <dbReference type="ChEBI" id="CHEBI:57287"/>
        <dbReference type="ChEBI" id="CHEBI:57288"/>
        <dbReference type="ChEBI" id="CHEBI:456215"/>
        <dbReference type="EC" id="6.2.1.1"/>
    </reaction>
</comment>
<comment type="cofactor">
    <cofactor evidence="1">
        <name>Mg(2+)</name>
        <dbReference type="ChEBI" id="CHEBI:18420"/>
    </cofactor>
</comment>
<comment type="PTM">
    <text evidence="1">Acetylated. Deacetylation by the SIR2-homolog deacetylase activates the enzyme.</text>
</comment>
<comment type="similarity">
    <text evidence="1">Belongs to the ATP-dependent AMP-binding enzyme family.</text>
</comment>
<accession>Q8UBV5</accession>